<gene>
    <name evidence="1" type="primary">ilvD</name>
    <name type="ordered locus">Rru_A1786</name>
</gene>
<protein>
    <recommendedName>
        <fullName evidence="1">Dihydroxy-acid dehydratase</fullName>
        <shortName evidence="1">DAD</shortName>
        <ecNumber evidence="1">4.2.1.9</ecNumber>
    </recommendedName>
</protein>
<organism>
    <name type="scientific">Rhodospirillum rubrum (strain ATCC 11170 / ATH 1.1.1 / DSM 467 / LMG 4362 / NCIMB 8255 / S1)</name>
    <dbReference type="NCBI Taxonomy" id="269796"/>
    <lineage>
        <taxon>Bacteria</taxon>
        <taxon>Pseudomonadati</taxon>
        <taxon>Pseudomonadota</taxon>
        <taxon>Alphaproteobacteria</taxon>
        <taxon>Rhodospirillales</taxon>
        <taxon>Rhodospirillaceae</taxon>
        <taxon>Rhodospirillum</taxon>
    </lineage>
</organism>
<comment type="function">
    <text evidence="1">Functions in the biosynthesis of branched-chain amino acids. Catalyzes the dehydration of (2R,3R)-2,3-dihydroxy-3-methylpentanoate (2,3-dihydroxy-3-methylvalerate) into 2-oxo-3-methylpentanoate (2-oxo-3-methylvalerate) and of (2R)-2,3-dihydroxy-3-methylbutanoate (2,3-dihydroxyisovalerate) into 2-oxo-3-methylbutanoate (2-oxoisovalerate), the penultimate precursor to L-isoleucine and L-valine, respectively.</text>
</comment>
<comment type="catalytic activity">
    <reaction evidence="1">
        <text>(2R)-2,3-dihydroxy-3-methylbutanoate = 3-methyl-2-oxobutanoate + H2O</text>
        <dbReference type="Rhea" id="RHEA:24809"/>
        <dbReference type="ChEBI" id="CHEBI:11851"/>
        <dbReference type="ChEBI" id="CHEBI:15377"/>
        <dbReference type="ChEBI" id="CHEBI:49072"/>
        <dbReference type="EC" id="4.2.1.9"/>
    </reaction>
    <physiologicalReaction direction="left-to-right" evidence="1">
        <dbReference type="Rhea" id="RHEA:24810"/>
    </physiologicalReaction>
</comment>
<comment type="catalytic activity">
    <reaction evidence="1">
        <text>(2R,3R)-2,3-dihydroxy-3-methylpentanoate = (S)-3-methyl-2-oxopentanoate + H2O</text>
        <dbReference type="Rhea" id="RHEA:27694"/>
        <dbReference type="ChEBI" id="CHEBI:15377"/>
        <dbReference type="ChEBI" id="CHEBI:35146"/>
        <dbReference type="ChEBI" id="CHEBI:49258"/>
        <dbReference type="EC" id="4.2.1.9"/>
    </reaction>
    <physiologicalReaction direction="left-to-right" evidence="1">
        <dbReference type="Rhea" id="RHEA:27695"/>
    </physiologicalReaction>
</comment>
<comment type="cofactor">
    <cofactor evidence="1">
        <name>[2Fe-2S] cluster</name>
        <dbReference type="ChEBI" id="CHEBI:190135"/>
    </cofactor>
    <text evidence="1">Binds 1 [2Fe-2S] cluster per subunit. This cluster acts as a Lewis acid cofactor.</text>
</comment>
<comment type="cofactor">
    <cofactor evidence="1">
        <name>Mg(2+)</name>
        <dbReference type="ChEBI" id="CHEBI:18420"/>
    </cofactor>
</comment>
<comment type="pathway">
    <text evidence="1">Amino-acid biosynthesis; L-isoleucine biosynthesis; L-isoleucine from 2-oxobutanoate: step 3/4.</text>
</comment>
<comment type="pathway">
    <text evidence="1">Amino-acid biosynthesis; L-valine biosynthesis; L-valine from pyruvate: step 3/4.</text>
</comment>
<comment type="subunit">
    <text evidence="1">Homodimer.</text>
</comment>
<comment type="similarity">
    <text evidence="1">Belongs to the IlvD/Edd family.</text>
</comment>
<comment type="sequence caution" evidence="2">
    <conflict type="erroneous initiation">
        <sequence resource="EMBL-CDS" id="ABC22586"/>
    </conflict>
</comment>
<proteinExistence type="inferred from homology"/>
<keyword id="KW-0001">2Fe-2S</keyword>
<keyword id="KW-0028">Amino-acid biosynthesis</keyword>
<keyword id="KW-0100">Branched-chain amino acid biosynthesis</keyword>
<keyword id="KW-0408">Iron</keyword>
<keyword id="KW-0411">Iron-sulfur</keyword>
<keyword id="KW-0456">Lyase</keyword>
<keyword id="KW-0460">Magnesium</keyword>
<keyword id="KW-0479">Metal-binding</keyword>
<keyword id="KW-1185">Reference proteome</keyword>
<evidence type="ECO:0000255" key="1">
    <source>
        <dbReference type="HAMAP-Rule" id="MF_00012"/>
    </source>
</evidence>
<evidence type="ECO:0000305" key="2"/>
<accession>Q2RTF9</accession>
<sequence>MTPYRSRTSTHGRTMAGARGLWRATGMKDEDFGKPIIAIANSFTQFVPGHVHLKDMGQLVAAEIAAAGGVAKEFNTIAVDDGIAMGHDGMLYSLPSRELIADAVEYMVNAHCADALVCISNCDKITPGMLMAAMRLNIPTIFVSGGPMEAGKVVLGGTERSVDLIDAMVVAGDAKVSDADVETIERSACPTCGSCSGMFTANSMNCLTEALGLSLPGNGSALATHVARRGLFEEAGRRIVDLAKRRYEHDDESTLPRAIASFKAFENAMSVDIAMGGSTNTVLHLLAAAQEGEVPFTMADIDRLSRRIPHLCKVSPSTADFYMEDVHRAGGVMGIMGELSRAGLLHEDLPTVHTPTLKAALDHWDIRRPVDDAVRAFFRAAPGGVRTVVPFSTDRLWDSLDDDRETGCIRDLDHAYSRDGGLAVLYGNLAPNGCIVKTAGVDASILTFTGTVRLCESQDEAVARILGGEIQAGDVVLVRYEGPKGGPGMQEMLYPTSYLKSRGLGKVCALVTDGRFSGGSSGLSIGHVSPEAAAGGPIGLVEEGDIIVIDIPARSIVVDLSDEELAARRSAMEARGRAGWKPAKPRKRAVSPALRAYAALTTSADRGAVRDVSQVER</sequence>
<dbReference type="EC" id="4.2.1.9" evidence="1"/>
<dbReference type="EMBL" id="CP000230">
    <property type="protein sequence ID" value="ABC22586.1"/>
    <property type="status" value="ALT_INIT"/>
    <property type="molecule type" value="Genomic_DNA"/>
</dbReference>
<dbReference type="RefSeq" id="WP_014626247.1">
    <property type="nucleotide sequence ID" value="NC_007643.1"/>
</dbReference>
<dbReference type="RefSeq" id="YP_426873.1">
    <property type="nucleotide sequence ID" value="NC_007643.1"/>
</dbReference>
<dbReference type="SMR" id="Q2RTF9"/>
<dbReference type="STRING" id="269796.Rru_A1786"/>
<dbReference type="EnsemblBacteria" id="ABC22586">
    <property type="protein sequence ID" value="ABC22586"/>
    <property type="gene ID" value="Rru_A1786"/>
</dbReference>
<dbReference type="KEGG" id="rru:Rru_A1786"/>
<dbReference type="PATRIC" id="fig|269796.9.peg.1864"/>
<dbReference type="eggNOG" id="COG0129">
    <property type="taxonomic scope" value="Bacteria"/>
</dbReference>
<dbReference type="HOGENOM" id="CLU_014271_4_2_5"/>
<dbReference type="UniPathway" id="UPA00047">
    <property type="reaction ID" value="UER00057"/>
</dbReference>
<dbReference type="UniPathway" id="UPA00049">
    <property type="reaction ID" value="UER00061"/>
</dbReference>
<dbReference type="Proteomes" id="UP000001929">
    <property type="component" value="Chromosome"/>
</dbReference>
<dbReference type="GO" id="GO:0005829">
    <property type="term" value="C:cytosol"/>
    <property type="evidence" value="ECO:0007669"/>
    <property type="project" value="TreeGrafter"/>
</dbReference>
<dbReference type="GO" id="GO:0051537">
    <property type="term" value="F:2 iron, 2 sulfur cluster binding"/>
    <property type="evidence" value="ECO:0007669"/>
    <property type="project" value="UniProtKB-UniRule"/>
</dbReference>
<dbReference type="GO" id="GO:0004160">
    <property type="term" value="F:dihydroxy-acid dehydratase activity"/>
    <property type="evidence" value="ECO:0007669"/>
    <property type="project" value="UniProtKB-UniRule"/>
</dbReference>
<dbReference type="GO" id="GO:0000287">
    <property type="term" value="F:magnesium ion binding"/>
    <property type="evidence" value="ECO:0007669"/>
    <property type="project" value="UniProtKB-UniRule"/>
</dbReference>
<dbReference type="GO" id="GO:0009097">
    <property type="term" value="P:isoleucine biosynthetic process"/>
    <property type="evidence" value="ECO:0007669"/>
    <property type="project" value="UniProtKB-UniRule"/>
</dbReference>
<dbReference type="GO" id="GO:0009099">
    <property type="term" value="P:L-valine biosynthetic process"/>
    <property type="evidence" value="ECO:0007669"/>
    <property type="project" value="UniProtKB-UniRule"/>
</dbReference>
<dbReference type="FunFam" id="3.50.30.80:FF:000001">
    <property type="entry name" value="Dihydroxy-acid dehydratase"/>
    <property type="match status" value="1"/>
</dbReference>
<dbReference type="Gene3D" id="3.50.30.80">
    <property type="entry name" value="IlvD/EDD C-terminal domain-like"/>
    <property type="match status" value="1"/>
</dbReference>
<dbReference type="HAMAP" id="MF_00012">
    <property type="entry name" value="IlvD"/>
    <property type="match status" value="1"/>
</dbReference>
<dbReference type="InterPro" id="IPR042096">
    <property type="entry name" value="Dihydro-acid_dehy_C"/>
</dbReference>
<dbReference type="InterPro" id="IPR004404">
    <property type="entry name" value="DihydroxyA_deHydtase"/>
</dbReference>
<dbReference type="InterPro" id="IPR020558">
    <property type="entry name" value="DiOHA_6PGluconate_deHydtase_CS"/>
</dbReference>
<dbReference type="InterPro" id="IPR056740">
    <property type="entry name" value="ILV_EDD_C"/>
</dbReference>
<dbReference type="InterPro" id="IPR000581">
    <property type="entry name" value="ILV_EDD_N"/>
</dbReference>
<dbReference type="InterPro" id="IPR037237">
    <property type="entry name" value="IlvD/EDD_N"/>
</dbReference>
<dbReference type="NCBIfam" id="TIGR00110">
    <property type="entry name" value="ilvD"/>
    <property type="match status" value="1"/>
</dbReference>
<dbReference type="NCBIfam" id="NF009103">
    <property type="entry name" value="PRK12448.1"/>
    <property type="match status" value="1"/>
</dbReference>
<dbReference type="PANTHER" id="PTHR43661">
    <property type="entry name" value="D-XYLONATE DEHYDRATASE"/>
    <property type="match status" value="1"/>
</dbReference>
<dbReference type="PANTHER" id="PTHR43661:SF3">
    <property type="entry name" value="D-XYLONATE DEHYDRATASE YAGF-RELATED"/>
    <property type="match status" value="1"/>
</dbReference>
<dbReference type="Pfam" id="PF24877">
    <property type="entry name" value="ILV_EDD_C"/>
    <property type="match status" value="1"/>
</dbReference>
<dbReference type="Pfam" id="PF00920">
    <property type="entry name" value="ILVD_EDD_N"/>
    <property type="match status" value="1"/>
</dbReference>
<dbReference type="SUPFAM" id="SSF143975">
    <property type="entry name" value="IlvD/EDD N-terminal domain-like"/>
    <property type="match status" value="1"/>
</dbReference>
<dbReference type="SUPFAM" id="SSF52016">
    <property type="entry name" value="LeuD/IlvD-like"/>
    <property type="match status" value="1"/>
</dbReference>
<dbReference type="PROSITE" id="PS00886">
    <property type="entry name" value="ILVD_EDD_1"/>
    <property type="match status" value="1"/>
</dbReference>
<dbReference type="PROSITE" id="PS00887">
    <property type="entry name" value="ILVD_EDD_2"/>
    <property type="match status" value="1"/>
</dbReference>
<name>ILVD_RHORT</name>
<reference key="1">
    <citation type="journal article" date="2011" name="Stand. Genomic Sci.">
        <title>Complete genome sequence of Rhodospirillum rubrum type strain (S1).</title>
        <authorList>
            <person name="Munk A.C."/>
            <person name="Copeland A."/>
            <person name="Lucas S."/>
            <person name="Lapidus A."/>
            <person name="Del Rio T.G."/>
            <person name="Barry K."/>
            <person name="Detter J.C."/>
            <person name="Hammon N."/>
            <person name="Israni S."/>
            <person name="Pitluck S."/>
            <person name="Brettin T."/>
            <person name="Bruce D."/>
            <person name="Han C."/>
            <person name="Tapia R."/>
            <person name="Gilna P."/>
            <person name="Schmutz J."/>
            <person name="Larimer F."/>
            <person name="Land M."/>
            <person name="Kyrpides N.C."/>
            <person name="Mavromatis K."/>
            <person name="Richardson P."/>
            <person name="Rohde M."/>
            <person name="Goeker M."/>
            <person name="Klenk H.P."/>
            <person name="Zhang Y."/>
            <person name="Roberts G.P."/>
            <person name="Reslewic S."/>
            <person name="Schwartz D.C."/>
        </authorList>
    </citation>
    <scope>NUCLEOTIDE SEQUENCE [LARGE SCALE GENOMIC DNA]</scope>
    <source>
        <strain>ATCC 11170 / ATH 1.1.1 / DSM 467 / LMG 4362 / NCIMB 8255 / S1</strain>
    </source>
</reference>
<feature type="chain" id="PRO_0000321604" description="Dihydroxy-acid dehydratase">
    <location>
        <begin position="1"/>
        <end position="617"/>
    </location>
</feature>
<feature type="active site" description="Proton acceptor" evidence="1">
    <location>
        <position position="517"/>
    </location>
</feature>
<feature type="binding site" evidence="1">
    <location>
        <position position="81"/>
    </location>
    <ligand>
        <name>Mg(2+)</name>
        <dbReference type="ChEBI" id="CHEBI:18420"/>
    </ligand>
</feature>
<feature type="binding site" evidence="1">
    <location>
        <position position="122"/>
    </location>
    <ligand>
        <name>[2Fe-2S] cluster</name>
        <dbReference type="ChEBI" id="CHEBI:190135"/>
    </ligand>
</feature>
<feature type="binding site" evidence="1">
    <location>
        <position position="123"/>
    </location>
    <ligand>
        <name>Mg(2+)</name>
        <dbReference type="ChEBI" id="CHEBI:18420"/>
    </ligand>
</feature>
<feature type="binding site" description="via carbamate group" evidence="1">
    <location>
        <position position="124"/>
    </location>
    <ligand>
        <name>Mg(2+)</name>
        <dbReference type="ChEBI" id="CHEBI:18420"/>
    </ligand>
</feature>
<feature type="binding site" evidence="1">
    <location>
        <position position="195"/>
    </location>
    <ligand>
        <name>[2Fe-2S] cluster</name>
        <dbReference type="ChEBI" id="CHEBI:190135"/>
    </ligand>
</feature>
<feature type="binding site" evidence="1">
    <location>
        <position position="491"/>
    </location>
    <ligand>
        <name>Mg(2+)</name>
        <dbReference type="ChEBI" id="CHEBI:18420"/>
    </ligand>
</feature>
<feature type="modified residue" description="N6-carboxylysine" evidence="1">
    <location>
        <position position="124"/>
    </location>
</feature>